<protein>
    <recommendedName>
        <fullName evidence="5">Frataxin, mitochondrial</fullName>
        <shortName>Fxn</shortName>
        <ecNumber evidence="2">1.16.3.1</ecNumber>
    </recommendedName>
    <component>
        <recommendedName>
            <fullName>Frataxin intermediate form</fullName>
        </recommendedName>
    </component>
    <component>
        <recommendedName>
            <fullName>Frataxin mature form</fullName>
        </recommendedName>
    </component>
    <component>
        <recommendedName>
            <fullName evidence="2">Extramitochondrial frataxin</fullName>
        </recommendedName>
    </component>
</protein>
<reference key="1">
    <citation type="journal article" date="2004" name="Nature">
        <title>Genome sequence of the Brown Norway rat yields insights into mammalian evolution.</title>
        <authorList>
            <person name="Gibbs R.A."/>
            <person name="Weinstock G.M."/>
            <person name="Metzker M.L."/>
            <person name="Muzny D.M."/>
            <person name="Sodergren E.J."/>
            <person name="Scherer S."/>
            <person name="Scott G."/>
            <person name="Steffen D."/>
            <person name="Worley K.C."/>
            <person name="Burch P.E."/>
            <person name="Okwuonu G."/>
            <person name="Hines S."/>
            <person name="Lewis L."/>
            <person name="Deramo C."/>
            <person name="Delgado O."/>
            <person name="Dugan-Rocha S."/>
            <person name="Miner G."/>
            <person name="Morgan M."/>
            <person name="Hawes A."/>
            <person name="Gill R."/>
            <person name="Holt R.A."/>
            <person name="Adams M.D."/>
            <person name="Amanatides P.G."/>
            <person name="Baden-Tillson H."/>
            <person name="Barnstead M."/>
            <person name="Chin S."/>
            <person name="Evans C.A."/>
            <person name="Ferriera S."/>
            <person name="Fosler C."/>
            <person name="Glodek A."/>
            <person name="Gu Z."/>
            <person name="Jennings D."/>
            <person name="Kraft C.L."/>
            <person name="Nguyen T."/>
            <person name="Pfannkoch C.M."/>
            <person name="Sitter C."/>
            <person name="Sutton G.G."/>
            <person name="Venter J.C."/>
            <person name="Woodage T."/>
            <person name="Smith D."/>
            <person name="Lee H.-M."/>
            <person name="Gustafson E."/>
            <person name="Cahill P."/>
            <person name="Kana A."/>
            <person name="Doucette-Stamm L."/>
            <person name="Weinstock K."/>
            <person name="Fechtel K."/>
            <person name="Weiss R.B."/>
            <person name="Dunn D.M."/>
            <person name="Green E.D."/>
            <person name="Blakesley R.W."/>
            <person name="Bouffard G.G."/>
            <person name="De Jong P.J."/>
            <person name="Osoegawa K."/>
            <person name="Zhu B."/>
            <person name="Marra M."/>
            <person name="Schein J."/>
            <person name="Bosdet I."/>
            <person name="Fjell C."/>
            <person name="Jones S."/>
            <person name="Krzywinski M."/>
            <person name="Mathewson C."/>
            <person name="Siddiqui A."/>
            <person name="Wye N."/>
            <person name="McPherson J."/>
            <person name="Zhao S."/>
            <person name="Fraser C.M."/>
            <person name="Shetty J."/>
            <person name="Shatsman S."/>
            <person name="Geer K."/>
            <person name="Chen Y."/>
            <person name="Abramzon S."/>
            <person name="Nierman W.C."/>
            <person name="Havlak P.H."/>
            <person name="Chen R."/>
            <person name="Durbin K.J."/>
            <person name="Egan A."/>
            <person name="Ren Y."/>
            <person name="Song X.-Z."/>
            <person name="Li B."/>
            <person name="Liu Y."/>
            <person name="Qin X."/>
            <person name="Cawley S."/>
            <person name="Cooney A.J."/>
            <person name="D'Souza L.M."/>
            <person name="Martin K."/>
            <person name="Wu J.Q."/>
            <person name="Gonzalez-Garay M.L."/>
            <person name="Jackson A.R."/>
            <person name="Kalafus K.J."/>
            <person name="McLeod M.P."/>
            <person name="Milosavljevic A."/>
            <person name="Virk D."/>
            <person name="Volkov A."/>
            <person name="Wheeler D.A."/>
            <person name="Zhang Z."/>
            <person name="Bailey J.A."/>
            <person name="Eichler E.E."/>
            <person name="Tuzun E."/>
            <person name="Birney E."/>
            <person name="Mongin E."/>
            <person name="Ureta-Vidal A."/>
            <person name="Woodwark C."/>
            <person name="Zdobnov E."/>
            <person name="Bork P."/>
            <person name="Suyama M."/>
            <person name="Torrents D."/>
            <person name="Alexandersson M."/>
            <person name="Trask B.J."/>
            <person name="Young J.M."/>
            <person name="Huang H."/>
            <person name="Wang H."/>
            <person name="Xing H."/>
            <person name="Daniels S."/>
            <person name="Gietzen D."/>
            <person name="Schmidt J."/>
            <person name="Stevens K."/>
            <person name="Vitt U."/>
            <person name="Wingrove J."/>
            <person name="Camara F."/>
            <person name="Mar Alba M."/>
            <person name="Abril J.F."/>
            <person name="Guigo R."/>
            <person name="Smit A."/>
            <person name="Dubchak I."/>
            <person name="Rubin E.M."/>
            <person name="Couronne O."/>
            <person name="Poliakov A."/>
            <person name="Huebner N."/>
            <person name="Ganten D."/>
            <person name="Goesele C."/>
            <person name="Hummel O."/>
            <person name="Kreitler T."/>
            <person name="Lee Y.-A."/>
            <person name="Monti J."/>
            <person name="Schulz H."/>
            <person name="Zimdahl H."/>
            <person name="Himmelbauer H."/>
            <person name="Lehrach H."/>
            <person name="Jacob H.J."/>
            <person name="Bromberg S."/>
            <person name="Gullings-Handley J."/>
            <person name="Jensen-Seaman M.I."/>
            <person name="Kwitek A.E."/>
            <person name="Lazar J."/>
            <person name="Pasko D."/>
            <person name="Tonellato P.J."/>
            <person name="Twigger S."/>
            <person name="Ponting C.P."/>
            <person name="Duarte J.M."/>
            <person name="Rice S."/>
            <person name="Goodstadt L."/>
            <person name="Beatson S.A."/>
            <person name="Emes R.D."/>
            <person name="Winter E.E."/>
            <person name="Webber C."/>
            <person name="Brandt P."/>
            <person name="Nyakatura G."/>
            <person name="Adetobi M."/>
            <person name="Chiaromonte F."/>
            <person name="Elnitski L."/>
            <person name="Eswara P."/>
            <person name="Hardison R.C."/>
            <person name="Hou M."/>
            <person name="Kolbe D."/>
            <person name="Makova K."/>
            <person name="Miller W."/>
            <person name="Nekrutenko A."/>
            <person name="Riemer C."/>
            <person name="Schwartz S."/>
            <person name="Taylor J."/>
            <person name="Yang S."/>
            <person name="Zhang Y."/>
            <person name="Lindpaintner K."/>
            <person name="Andrews T.D."/>
            <person name="Caccamo M."/>
            <person name="Clamp M."/>
            <person name="Clarke L."/>
            <person name="Curwen V."/>
            <person name="Durbin R.M."/>
            <person name="Eyras E."/>
            <person name="Searle S.M."/>
            <person name="Cooper G.M."/>
            <person name="Batzoglou S."/>
            <person name="Brudno M."/>
            <person name="Sidow A."/>
            <person name="Stone E.A."/>
            <person name="Payseur B.A."/>
            <person name="Bourque G."/>
            <person name="Lopez-Otin C."/>
            <person name="Puente X.S."/>
            <person name="Chakrabarti K."/>
            <person name="Chatterji S."/>
            <person name="Dewey C."/>
            <person name="Pachter L."/>
            <person name="Bray N."/>
            <person name="Yap V.B."/>
            <person name="Caspi A."/>
            <person name="Tesler G."/>
            <person name="Pevzner P.A."/>
            <person name="Haussler D."/>
            <person name="Roskin K.M."/>
            <person name="Baertsch R."/>
            <person name="Clawson H."/>
            <person name="Furey T.S."/>
            <person name="Hinrichs A.S."/>
            <person name="Karolchik D."/>
            <person name="Kent W.J."/>
            <person name="Rosenbloom K.R."/>
            <person name="Trumbower H."/>
            <person name="Weirauch M."/>
            <person name="Cooper D.N."/>
            <person name="Stenson P.D."/>
            <person name="Ma B."/>
            <person name="Brent M."/>
            <person name="Arumugam M."/>
            <person name="Shteynberg D."/>
            <person name="Copley R.R."/>
            <person name="Taylor M.S."/>
            <person name="Riethman H."/>
            <person name="Mudunuri U."/>
            <person name="Peterson J."/>
            <person name="Guyer M."/>
            <person name="Felsenfeld A."/>
            <person name="Old S."/>
            <person name="Mockrin S."/>
            <person name="Collins F.S."/>
        </authorList>
    </citation>
    <scope>NUCLEOTIDE SEQUENCE [LARGE SCALE GENOMIC DNA]</scope>
    <source>
        <strain>Brown Norway</strain>
    </source>
</reference>
<reference key="2">
    <citation type="journal article" date="2004" name="Science">
        <title>Frataxin acts as an iron chaperone protein to modulate mitochondrial aconitase activity.</title>
        <authorList>
            <person name="Bulteau A.L."/>
            <person name="O'Neill H.A."/>
            <person name="Kennedy M.C."/>
            <person name="Ikeda-Saito M."/>
            <person name="Isaya G."/>
            <person name="Szweda L.I."/>
        </authorList>
    </citation>
    <scope>FUNCTION AS IRON CHAPERONE</scope>
    <scope>INTERACTION WITH ACO2</scope>
</reference>
<name>FRDA_RAT</name>
<sequence length="208" mass="23066">MWTFGRRAAAGLLPRTASRASAWVRNPRGRERIGTCGRRGLHVTANADAIRHSHLNLHYLGQILNIKKQSVCVVHLRNSGTLGNPSSLDETAYERLAEETLDALAEFFEDLADKPYTLKDYDVSFGDGVLTIKLGGDLGTYVINKQTPLLYLWFSGPCSGPKRYDWTGKNWVYSHDGVSLHELLARELTEALNTKLDLSSLAYSGKGT</sequence>
<keyword id="KW-0963">Cytoplasm</keyword>
<keyword id="KW-0350">Heme biosynthesis</keyword>
<keyword id="KW-0406">Ion transport</keyword>
<keyword id="KW-0408">Iron</keyword>
<keyword id="KW-0409">Iron storage</keyword>
<keyword id="KW-0410">Iron transport</keyword>
<keyword id="KW-0496">Mitochondrion</keyword>
<keyword id="KW-0560">Oxidoreductase</keyword>
<keyword id="KW-1185">Reference proteome</keyword>
<keyword id="KW-0809">Transit peptide</keyword>
<keyword id="KW-0813">Transport</keyword>
<feature type="transit peptide" description="Mitochondrion" evidence="1">
    <location>
        <begin position="1"/>
        <end position="40"/>
    </location>
</feature>
<feature type="chain" id="PRO_0000399465" description="Frataxin intermediate form">
    <location>
        <begin position="41"/>
        <end position="208"/>
    </location>
</feature>
<feature type="chain" id="PRO_0000456950" description="Extramitochondrial frataxin" evidence="2">
    <location>
        <begin position="79"/>
        <end position="208"/>
    </location>
</feature>
<feature type="chain" id="PRO_0000399391" description="Frataxin mature form" evidence="1">
    <location>
        <begin position="79"/>
        <end position="208"/>
    </location>
</feature>
<dbReference type="EC" id="1.16.3.1" evidence="2"/>
<dbReference type="EMBL" id="AABR03005338">
    <property type="status" value="NOT_ANNOTATED_CDS"/>
    <property type="molecule type" value="Genomic_DNA"/>
</dbReference>
<dbReference type="EMBL" id="AABR03006217">
    <property type="status" value="NOT_ANNOTATED_CDS"/>
    <property type="molecule type" value="Genomic_DNA"/>
</dbReference>
<dbReference type="EMBL" id="AABR03009513">
    <property type="status" value="NOT_ANNOTATED_CDS"/>
    <property type="molecule type" value="Genomic_DNA"/>
</dbReference>
<dbReference type="SMR" id="D3ZYW7"/>
<dbReference type="FunCoup" id="D3ZYW7">
    <property type="interactions" value="1018"/>
</dbReference>
<dbReference type="STRING" id="10116.ENSRNOP00000020412"/>
<dbReference type="iPTMnet" id="D3ZYW7"/>
<dbReference type="PhosphoSitePlus" id="D3ZYW7"/>
<dbReference type="PaxDb" id="10116-ENSRNOP00000020412"/>
<dbReference type="PeptideAtlas" id="D3ZYW7"/>
<dbReference type="UCSC" id="RGD:1565754">
    <property type="organism name" value="rat"/>
</dbReference>
<dbReference type="AGR" id="RGD:1565754"/>
<dbReference type="RGD" id="1565754">
    <property type="gene designation" value="Fxn"/>
</dbReference>
<dbReference type="eggNOG" id="KOG3413">
    <property type="taxonomic scope" value="Eukaryota"/>
</dbReference>
<dbReference type="InParanoid" id="D3ZYW7"/>
<dbReference type="PhylomeDB" id="D3ZYW7"/>
<dbReference type="TreeFam" id="TF318958"/>
<dbReference type="Reactome" id="R-RNO-1268020">
    <property type="pathway name" value="Mitochondrial protein import"/>
</dbReference>
<dbReference type="Reactome" id="R-RNO-1362409">
    <property type="pathway name" value="Mitochondrial iron-sulfur cluster biogenesis"/>
</dbReference>
<dbReference type="Reactome" id="R-RNO-9854311">
    <property type="pathway name" value="Maturation of TCA enzymes and regulation of TCA cycle"/>
</dbReference>
<dbReference type="Reactome" id="R-RNO-9865881">
    <property type="pathway name" value="Complex III assembly"/>
</dbReference>
<dbReference type="PRO" id="PR:D3ZYW7"/>
<dbReference type="Proteomes" id="UP000002494">
    <property type="component" value="Unplaced"/>
</dbReference>
<dbReference type="GO" id="GO:0005829">
    <property type="term" value="C:cytosol"/>
    <property type="evidence" value="ECO:0000266"/>
    <property type="project" value="RGD"/>
</dbReference>
<dbReference type="GO" id="GO:0099128">
    <property type="term" value="C:mitochondrial [2Fe-2S] assembly complex"/>
    <property type="evidence" value="ECO:0000250"/>
    <property type="project" value="UniProtKB"/>
</dbReference>
<dbReference type="GO" id="GO:0005739">
    <property type="term" value="C:mitochondrion"/>
    <property type="evidence" value="ECO:0000314"/>
    <property type="project" value="RGD"/>
</dbReference>
<dbReference type="GO" id="GO:0051537">
    <property type="term" value="F:2 iron, 2 sulfur cluster binding"/>
    <property type="evidence" value="ECO:0000266"/>
    <property type="project" value="RGD"/>
</dbReference>
<dbReference type="GO" id="GO:0019899">
    <property type="term" value="F:enzyme binding"/>
    <property type="evidence" value="ECO:0000353"/>
    <property type="project" value="RGD"/>
</dbReference>
<dbReference type="GO" id="GO:0008199">
    <property type="term" value="F:ferric iron binding"/>
    <property type="evidence" value="ECO:0000266"/>
    <property type="project" value="RGD"/>
</dbReference>
<dbReference type="GO" id="GO:0008198">
    <property type="term" value="F:ferrous iron binding"/>
    <property type="evidence" value="ECO:0000266"/>
    <property type="project" value="RGD"/>
</dbReference>
<dbReference type="GO" id="GO:0004322">
    <property type="term" value="F:ferroxidase activity"/>
    <property type="evidence" value="ECO:0000266"/>
    <property type="project" value="RGD"/>
</dbReference>
<dbReference type="GO" id="GO:0034986">
    <property type="term" value="F:iron chaperone activity"/>
    <property type="evidence" value="ECO:0000266"/>
    <property type="project" value="RGD"/>
</dbReference>
<dbReference type="GO" id="GO:0016530">
    <property type="term" value="F:metallochaperone activity"/>
    <property type="evidence" value="ECO:0000303"/>
    <property type="project" value="RGD"/>
</dbReference>
<dbReference type="GO" id="GO:0044571">
    <property type="term" value="P:[2Fe-2S] cluster assembly"/>
    <property type="evidence" value="ECO:0000250"/>
    <property type="project" value="UniProtKB"/>
</dbReference>
<dbReference type="GO" id="GO:0044572">
    <property type="term" value="P:[4Fe-4S] cluster assembly"/>
    <property type="evidence" value="ECO:0000250"/>
    <property type="project" value="UniProtKB"/>
</dbReference>
<dbReference type="GO" id="GO:0007628">
    <property type="term" value="P:adult walking behavior"/>
    <property type="evidence" value="ECO:0000266"/>
    <property type="project" value="RGD"/>
</dbReference>
<dbReference type="GO" id="GO:0009060">
    <property type="term" value="P:aerobic respiration"/>
    <property type="evidence" value="ECO:0000266"/>
    <property type="project" value="RGD"/>
</dbReference>
<dbReference type="GO" id="GO:0042149">
    <property type="term" value="P:cellular response to glucose starvation"/>
    <property type="evidence" value="ECO:0000270"/>
    <property type="project" value="RGD"/>
</dbReference>
<dbReference type="GO" id="GO:0070301">
    <property type="term" value="P:cellular response to hydrogen peroxide"/>
    <property type="evidence" value="ECO:0000266"/>
    <property type="project" value="RGD"/>
</dbReference>
<dbReference type="GO" id="GO:0071456">
    <property type="term" value="P:cellular response to hypoxia"/>
    <property type="evidence" value="ECO:0000270"/>
    <property type="project" value="RGD"/>
</dbReference>
<dbReference type="GO" id="GO:0009792">
    <property type="term" value="P:embryo development ending in birth or egg hatching"/>
    <property type="evidence" value="ECO:0000266"/>
    <property type="project" value="RGD"/>
</dbReference>
<dbReference type="GO" id="GO:0006783">
    <property type="term" value="P:heme biosynthetic process"/>
    <property type="evidence" value="ECO:0007669"/>
    <property type="project" value="UniProtKB-KW"/>
</dbReference>
<dbReference type="GO" id="GO:0006879">
    <property type="term" value="P:intracellular iron ion homeostasis"/>
    <property type="evidence" value="ECO:0000266"/>
    <property type="project" value="RGD"/>
</dbReference>
<dbReference type="GO" id="GO:0048250">
    <property type="term" value="P:iron import into the mitochondrion"/>
    <property type="evidence" value="ECO:0000315"/>
    <property type="project" value="RGD"/>
</dbReference>
<dbReference type="GO" id="GO:0016226">
    <property type="term" value="P:iron-sulfur cluster assembly"/>
    <property type="evidence" value="ECO:0000266"/>
    <property type="project" value="RGD"/>
</dbReference>
<dbReference type="GO" id="GO:0007005">
    <property type="term" value="P:mitochondrion organization"/>
    <property type="evidence" value="ECO:0000266"/>
    <property type="project" value="RGD"/>
</dbReference>
<dbReference type="GO" id="GO:0046716">
    <property type="term" value="P:muscle cell cellular homeostasis"/>
    <property type="evidence" value="ECO:0000266"/>
    <property type="project" value="RGD"/>
</dbReference>
<dbReference type="GO" id="GO:0043066">
    <property type="term" value="P:negative regulation of apoptotic process"/>
    <property type="evidence" value="ECO:0000266"/>
    <property type="project" value="RGD"/>
</dbReference>
<dbReference type="GO" id="GO:0010888">
    <property type="term" value="P:negative regulation of lipid storage"/>
    <property type="evidence" value="ECO:0000315"/>
    <property type="project" value="RGD"/>
</dbReference>
<dbReference type="GO" id="GO:0040015">
    <property type="term" value="P:negative regulation of multicellular organism growth"/>
    <property type="evidence" value="ECO:0000266"/>
    <property type="project" value="RGD"/>
</dbReference>
<dbReference type="GO" id="GO:0043524">
    <property type="term" value="P:negative regulation of neuron apoptotic process"/>
    <property type="evidence" value="ECO:0000315"/>
    <property type="project" value="RGD"/>
</dbReference>
<dbReference type="GO" id="GO:0046621">
    <property type="term" value="P:negative regulation of organ growth"/>
    <property type="evidence" value="ECO:0000266"/>
    <property type="project" value="RGD"/>
</dbReference>
<dbReference type="GO" id="GO:0090201">
    <property type="term" value="P:negative regulation of release of cytochrome c from mitochondria"/>
    <property type="evidence" value="ECO:0000266"/>
    <property type="project" value="RGD"/>
</dbReference>
<dbReference type="GO" id="GO:0035265">
    <property type="term" value="P:organ growth"/>
    <property type="evidence" value="ECO:0000266"/>
    <property type="project" value="RGD"/>
</dbReference>
<dbReference type="GO" id="GO:0006119">
    <property type="term" value="P:oxidative phosphorylation"/>
    <property type="evidence" value="ECO:0000266"/>
    <property type="project" value="RGD"/>
</dbReference>
<dbReference type="GO" id="GO:0045773">
    <property type="term" value="P:positive regulation of axon extension"/>
    <property type="evidence" value="ECO:0000315"/>
    <property type="project" value="RGD"/>
</dbReference>
<dbReference type="GO" id="GO:0030307">
    <property type="term" value="P:positive regulation of cell growth"/>
    <property type="evidence" value="ECO:0000266"/>
    <property type="project" value="RGD"/>
</dbReference>
<dbReference type="GO" id="GO:0008284">
    <property type="term" value="P:positive regulation of cell population proliferation"/>
    <property type="evidence" value="ECO:0000266"/>
    <property type="project" value="RGD"/>
</dbReference>
<dbReference type="GO" id="GO:0035794">
    <property type="term" value="P:positive regulation of mitochondrial membrane permeability"/>
    <property type="evidence" value="ECO:0000315"/>
    <property type="project" value="RGD"/>
</dbReference>
<dbReference type="GO" id="GO:0019230">
    <property type="term" value="P:proprioception"/>
    <property type="evidence" value="ECO:0000266"/>
    <property type="project" value="RGD"/>
</dbReference>
<dbReference type="GO" id="GO:0016540">
    <property type="term" value="P:protein autoprocessing"/>
    <property type="evidence" value="ECO:0000266"/>
    <property type="project" value="RGD"/>
</dbReference>
<dbReference type="GO" id="GO:0051480">
    <property type="term" value="P:regulation of cytosolic calcium ion concentration"/>
    <property type="evidence" value="ECO:0000315"/>
    <property type="project" value="RGD"/>
</dbReference>
<dbReference type="GO" id="GO:0072718">
    <property type="term" value="P:response to cisplatin"/>
    <property type="evidence" value="ECO:0000270"/>
    <property type="project" value="RGD"/>
</dbReference>
<dbReference type="GO" id="GO:0010039">
    <property type="term" value="P:response to iron ion"/>
    <property type="evidence" value="ECO:0000266"/>
    <property type="project" value="RGD"/>
</dbReference>
<dbReference type="CDD" id="cd00503">
    <property type="entry name" value="Frataxin"/>
    <property type="match status" value="1"/>
</dbReference>
<dbReference type="FunFam" id="3.30.920.10:FF:000002">
    <property type="entry name" value="Frataxin, mitochondrial"/>
    <property type="match status" value="1"/>
</dbReference>
<dbReference type="Gene3D" id="3.30.920.10">
    <property type="entry name" value="Frataxin/CyaY"/>
    <property type="match status" value="1"/>
</dbReference>
<dbReference type="InterPro" id="IPR017789">
    <property type="entry name" value="Frataxin"/>
</dbReference>
<dbReference type="InterPro" id="IPR002908">
    <property type="entry name" value="Frataxin/CyaY"/>
</dbReference>
<dbReference type="InterPro" id="IPR036524">
    <property type="entry name" value="Frataxin/CyaY_sf"/>
</dbReference>
<dbReference type="NCBIfam" id="TIGR03421">
    <property type="entry name" value="FeS_CyaY"/>
    <property type="match status" value="1"/>
</dbReference>
<dbReference type="NCBIfam" id="TIGR03422">
    <property type="entry name" value="mito_frataxin"/>
    <property type="match status" value="1"/>
</dbReference>
<dbReference type="PANTHER" id="PTHR16821">
    <property type="entry name" value="FRATAXIN"/>
    <property type="match status" value="1"/>
</dbReference>
<dbReference type="PANTHER" id="PTHR16821:SF2">
    <property type="entry name" value="FRATAXIN, MITOCHONDRIAL"/>
    <property type="match status" value="1"/>
</dbReference>
<dbReference type="Pfam" id="PF01491">
    <property type="entry name" value="Frataxin_Cyay"/>
    <property type="match status" value="1"/>
</dbReference>
<dbReference type="PRINTS" id="PR00904">
    <property type="entry name" value="FRATAXIN"/>
</dbReference>
<dbReference type="SMART" id="SM01219">
    <property type="entry name" value="Frataxin_Cyay"/>
    <property type="match status" value="1"/>
</dbReference>
<dbReference type="SUPFAM" id="SSF55387">
    <property type="entry name" value="Frataxin/Nqo15-like"/>
    <property type="match status" value="1"/>
</dbReference>
<dbReference type="PROSITE" id="PS50810">
    <property type="entry name" value="FRATAXIN_2"/>
    <property type="match status" value="1"/>
</dbReference>
<gene>
    <name evidence="7" type="primary">Fxn</name>
</gene>
<comment type="function">
    <molecule>Frataxin mature form</molecule>
    <text evidence="2 3 4">Functions as an activator of persulfide transfer to the scaffoding protein ISCU as component of the core iron-sulfur cluster (ISC) assembly complex and participates to the [2Fe-2S] cluster assembly. Accelerates sulfur transfer from NFS1 persulfide intermediate to ISCU and to small thiols such as L-cysteine and glutathione leading to persulfuration of these thiols and ultimately sulfide release. Binds ferrous ion and is released from FXN upon the addition of both L-cysteine and reduced FDX2 during [2Fe-2S] cluster assembly (By similarity). The core iron-sulfur cluster (ISC) assembly complex is involved in the de novo synthesis of a [2Fe-2S] cluster, the first step of the mitochondrial iron-sulfur protein biogenesis. This process is initiated by the cysteine desulfurase complex (NFS1:LYRM4:NDUFAB1) that produces persulfide which is delivered on the scaffold protein ISCU in a FXN-dependent manner. Then this complex is stabilized by FDX2 which provides reducing equivalents to accomplish the [2Fe-2S] cluster assembly. Finally, the [2Fe-2S] cluster is transferred from ISCU to chaperone proteins, including HSCB, HSPA9 and GLRX5 (By similarity). May play a role in the protection against iron-catalyzed oxidative stress through its ability to catalyze the oxidation of Fe(2+) to Fe(3+); the oligomeric form but not the monomeric form has in vitro ferroxidase activity. May be able to store large amounts of iron in the form of a ferrihydrite mineral by oligomerization; however, the physiological relevance is unsure as reports are conflicting and the function has only been shown using heterologous overexpression systems (By similarity). May function as an iron chaperone protein that protects the aconitase [4Fe-4S]2+ cluster from disassembly and promotes enzyme reactivation (PubMed:15247478). May play a role as a high affinity iron binding partner for FECH that is capable of both delivering iron to ferrochelatase and mediating the terminal step in mitochondrial heme biosynthesis (By similarity).</text>
</comment>
<comment type="function">
    <molecule>Extramitochondrial frataxin</molecule>
    <text evidence="2">Modulates the RNA-binding activity of ACO1. May be involved in the cytoplasmic iron-sulfur protein biogenesis. May contribute to oxidative stress resistance and overall cell survival.</text>
</comment>
<comment type="catalytic activity">
    <molecule>Frataxin mature form</molecule>
    <reaction evidence="2">
        <text>4 Fe(2+) + O2 + 4 H(+) = 4 Fe(3+) + 2 H2O</text>
        <dbReference type="Rhea" id="RHEA:11148"/>
        <dbReference type="ChEBI" id="CHEBI:15377"/>
        <dbReference type="ChEBI" id="CHEBI:15378"/>
        <dbReference type="ChEBI" id="CHEBI:15379"/>
        <dbReference type="ChEBI" id="CHEBI:29033"/>
        <dbReference type="ChEBI" id="CHEBI:29034"/>
        <dbReference type="EC" id="1.16.3.1"/>
    </reaction>
</comment>
<comment type="subunit">
    <molecule>Frataxin mature form</molecule>
    <text evidence="2 4">Component of the mitochondrial core iron-sulfur cluster (ISC) complex composed of NFS1, LYRM4, NDUFAB1, ISCU, FXN, and FDX2; this complex is a heterohexamer containing two copies of each monomer. Homodimer. Monomer (probable predominant form). Oligomer. Monomers and polymeric aggregates of &gt;1 MDa have been isolated from mitochondria. A small fraction of heterologous overexpressed recombinant frataxin forms high-molecular weight aggregates that incorporate iron. Interacts with LYRM4. Interacts (via ferrous form) with ISCU; the interaction is possible when both are bound to the dimeric form of the cysteine desulfurase complex (NFS1:LYRM4) and the interaction enhances FXN interaction to the dimeric form of the cysteine desulfurase complex (NFS1:LYRM4) (By similarity). Interacts with FECH; one iron-bound FXN monomer seems to interact with a FECH homodimer. Interacts with SDHA and SDHB (By similarity). Interacts with ACO2; the interaction is dependent on citrate (PubMed:15247478). Interacts with HSPA9 (By similarity).</text>
</comment>
<comment type="subunit">
    <molecule>Extramitochondrial frataxin</molecule>
    <text evidence="2">Interacts with ACO1. Interacts with ISCU (cytoplasmic form).</text>
</comment>
<comment type="subcellular location">
    <molecule>Frataxin mature form</molecule>
    <subcellularLocation>
        <location evidence="2">Mitochondrion</location>
    </subcellularLocation>
</comment>
<comment type="subcellular location">
    <molecule>Extramitochondrial frataxin</molecule>
    <subcellularLocation>
        <location evidence="2">Cytoplasm</location>
        <location evidence="2">Cytosol</location>
    </subcellularLocation>
</comment>
<comment type="PTM">
    <molecule>Frataxin mature form</molecule>
    <text evidence="2">Processed in two steps by mitochondrial processing peptidase (MPP). MPP first cleaves the precursor to intermediate form and subsequently converts the intermediate to yield frataxin mature form (frataxin(81-210)) which is the predominant form. The additional forms, frataxin(56-210) and frataxin(78-210), seem to be produced when the normal maturation process is impaired; their physiological relevance is unsure.</text>
</comment>
<comment type="similarity">
    <text evidence="6">Belongs to the frataxin family.</text>
</comment>
<accession>D3ZYW7</accession>
<evidence type="ECO:0000250" key="1"/>
<evidence type="ECO:0000250" key="2">
    <source>
        <dbReference type="UniProtKB" id="Q16595"/>
    </source>
</evidence>
<evidence type="ECO:0000250" key="3">
    <source>
        <dbReference type="UniProtKB" id="Q9H1K1"/>
    </source>
</evidence>
<evidence type="ECO:0000269" key="4">
    <source>
    </source>
</evidence>
<evidence type="ECO:0000303" key="5">
    <source>
    </source>
</evidence>
<evidence type="ECO:0000305" key="6"/>
<evidence type="ECO:0000312" key="7">
    <source>
        <dbReference type="RGD" id="1565754"/>
    </source>
</evidence>
<organism>
    <name type="scientific">Rattus norvegicus</name>
    <name type="common">Rat</name>
    <dbReference type="NCBI Taxonomy" id="10116"/>
    <lineage>
        <taxon>Eukaryota</taxon>
        <taxon>Metazoa</taxon>
        <taxon>Chordata</taxon>
        <taxon>Craniata</taxon>
        <taxon>Vertebrata</taxon>
        <taxon>Euteleostomi</taxon>
        <taxon>Mammalia</taxon>
        <taxon>Eutheria</taxon>
        <taxon>Euarchontoglires</taxon>
        <taxon>Glires</taxon>
        <taxon>Rodentia</taxon>
        <taxon>Myomorpha</taxon>
        <taxon>Muroidea</taxon>
        <taxon>Muridae</taxon>
        <taxon>Murinae</taxon>
        <taxon>Rattus</taxon>
    </lineage>
</organism>
<proteinExistence type="evidence at protein level"/>